<organism>
    <name type="scientific">Streptococcus pneumoniae serotype 19F (strain G54)</name>
    <dbReference type="NCBI Taxonomy" id="512566"/>
    <lineage>
        <taxon>Bacteria</taxon>
        <taxon>Bacillati</taxon>
        <taxon>Bacillota</taxon>
        <taxon>Bacilli</taxon>
        <taxon>Lactobacillales</taxon>
        <taxon>Streptococcaceae</taxon>
        <taxon>Streptococcus</taxon>
    </lineage>
</organism>
<accession>B5E6I3</accession>
<dbReference type="EMBL" id="CP001015">
    <property type="protein sequence ID" value="ACF55500.1"/>
    <property type="molecule type" value="Genomic_DNA"/>
</dbReference>
<dbReference type="SMR" id="B5E6I3"/>
<dbReference type="KEGG" id="spx:SPG_0223"/>
<dbReference type="HOGENOM" id="CLU_048704_0_0_9"/>
<dbReference type="CDD" id="cd08025">
    <property type="entry name" value="RNR_PFL_like_DUF711"/>
    <property type="match status" value="1"/>
</dbReference>
<dbReference type="Gene3D" id="3.20.70.20">
    <property type="match status" value="1"/>
</dbReference>
<dbReference type="HAMAP" id="MF_01221">
    <property type="entry name" value="UPF0210"/>
    <property type="match status" value="1"/>
</dbReference>
<dbReference type="InterPro" id="IPR007841">
    <property type="entry name" value="UPF0210"/>
</dbReference>
<dbReference type="NCBIfam" id="NF003700">
    <property type="entry name" value="PRK05313.1"/>
    <property type="match status" value="1"/>
</dbReference>
<dbReference type="PANTHER" id="PTHR37560:SF1">
    <property type="entry name" value="UPF0210 PROTEIN MJ1665"/>
    <property type="match status" value="1"/>
</dbReference>
<dbReference type="PANTHER" id="PTHR37560">
    <property type="entry name" value="UPF0210 PROTEIN SPR0218"/>
    <property type="match status" value="1"/>
</dbReference>
<dbReference type="Pfam" id="PF05167">
    <property type="entry name" value="DUF711"/>
    <property type="match status" value="1"/>
</dbReference>
<dbReference type="SUPFAM" id="SSF51998">
    <property type="entry name" value="PFL-like glycyl radical enzymes"/>
    <property type="match status" value="1"/>
</dbReference>
<comment type="subunit">
    <text evidence="1">Homodimer.</text>
</comment>
<comment type="similarity">
    <text evidence="1">Belongs to the UPF0210 family.</text>
</comment>
<evidence type="ECO:0000255" key="1">
    <source>
        <dbReference type="HAMAP-Rule" id="MF_01221"/>
    </source>
</evidence>
<name>Y223_STRP4</name>
<proteinExistence type="inferred from homology"/>
<feature type="chain" id="PRO_1000139233" description="UPF0210 protein SPG_0223">
    <location>
        <begin position="1"/>
        <end position="445"/>
    </location>
</feature>
<gene>
    <name type="ordered locus">SPG_0223</name>
</gene>
<reference key="1">
    <citation type="journal article" date="2001" name="Microb. Drug Resist.">
        <title>Annotated draft genomic sequence from a Streptococcus pneumoniae type 19F clinical isolate.</title>
        <authorList>
            <person name="Dopazo J."/>
            <person name="Mendoza A."/>
            <person name="Herrero J."/>
            <person name="Caldara F."/>
            <person name="Humbert Y."/>
            <person name="Friedli L."/>
            <person name="Guerrier M."/>
            <person name="Grand-Schenk E."/>
            <person name="Gandin C."/>
            <person name="de Francesco M."/>
            <person name="Polissi A."/>
            <person name="Buell G."/>
            <person name="Feger G."/>
            <person name="Garcia E."/>
            <person name="Peitsch M."/>
            <person name="Garcia-Bustos J.F."/>
        </authorList>
    </citation>
    <scope>NUCLEOTIDE SEQUENCE [LARGE SCALE GENOMIC DNA]</scope>
    <source>
        <strain>G54</strain>
    </source>
</reference>
<reference key="2">
    <citation type="submission" date="2008-03" db="EMBL/GenBank/DDBJ databases">
        <title>Pneumococcal beta glucoside metabolism investigated by whole genome comparison.</title>
        <authorList>
            <person name="Mulas L."/>
            <person name="Trappetti C."/>
            <person name="Hakenbeck R."/>
            <person name="Iannelli F."/>
            <person name="Pozzi G."/>
            <person name="Davidsen T.M."/>
            <person name="Tettelin H."/>
            <person name="Oggioni M."/>
        </authorList>
    </citation>
    <scope>NUCLEOTIDE SEQUENCE [LARGE SCALE GENOMIC DNA]</scope>
    <source>
        <strain>G54</strain>
    </source>
</reference>
<sequence length="445" mass="46382">MDIRQVTETIAMIEEQNFDIRTITMGISLLDCIDPDINRAAEKIYQKITTKAANLVAVGDEIAAELGIPIVNKRVSVTPISLIGAATDATDYVVLAKALDKAAKEIGVDFIGGFSALVQKGYQKGDEILINSIPRALAETDKVCSSVNIGSTKSGINMTAVADMGRIIKETANLSDMGVAKLVVFANAVEDNPFMAGAFHGVGEADVIINVGVSGPGVVKRALEKVRGQSFDVVAETVKKTAFKITRIGQLVGQMASERLGVEFGIVDLSLAPTPAVGDSVARVLEEMGLETVGTHGTTAALALLNDQVKKGGVMACNQVGGLSGAFIPVSEDEGMIAAVQNGSLNLEKLEAMTAICSVGLDMIAIPEDTPAETIAAMIADEAAIGVINMKTTAVRIIPKGKEGDMIEFGGLLGTAPVMRVNGASSVDFISRGGQIPAPIHSFKN</sequence>
<protein>
    <recommendedName>
        <fullName evidence="1">UPF0210 protein SPG_0223</fullName>
    </recommendedName>
</protein>